<comment type="function">
    <text evidence="1">RNA chaperone that binds small regulatory RNA (sRNAs) and mRNAs to facilitate mRNA translational regulation in response to envelope stress, environmental stress and changes in metabolite concentrations. Also binds with high specificity to tRNAs.</text>
</comment>
<comment type="subunit">
    <text evidence="1">Homohexamer.</text>
</comment>
<comment type="similarity">
    <text evidence="1">Belongs to the Hfq family.</text>
</comment>
<dbReference type="EMBL" id="CP000390">
    <property type="protein sequence ID" value="ABG63008.1"/>
    <property type="molecule type" value="Genomic_DNA"/>
</dbReference>
<dbReference type="SMR" id="Q11HW7"/>
<dbReference type="STRING" id="266779.Meso_1613"/>
<dbReference type="KEGG" id="mes:Meso_1613"/>
<dbReference type="eggNOG" id="COG1923">
    <property type="taxonomic scope" value="Bacteria"/>
</dbReference>
<dbReference type="HOGENOM" id="CLU_113688_0_0_5"/>
<dbReference type="OrthoDB" id="9799751at2"/>
<dbReference type="GO" id="GO:0005829">
    <property type="term" value="C:cytosol"/>
    <property type="evidence" value="ECO:0007669"/>
    <property type="project" value="TreeGrafter"/>
</dbReference>
<dbReference type="GO" id="GO:0003723">
    <property type="term" value="F:RNA binding"/>
    <property type="evidence" value="ECO:0007669"/>
    <property type="project" value="UniProtKB-UniRule"/>
</dbReference>
<dbReference type="GO" id="GO:0006355">
    <property type="term" value="P:regulation of DNA-templated transcription"/>
    <property type="evidence" value="ECO:0007669"/>
    <property type="project" value="InterPro"/>
</dbReference>
<dbReference type="GO" id="GO:0043487">
    <property type="term" value="P:regulation of RNA stability"/>
    <property type="evidence" value="ECO:0007669"/>
    <property type="project" value="TreeGrafter"/>
</dbReference>
<dbReference type="GO" id="GO:0045974">
    <property type="term" value="P:regulation of translation, ncRNA-mediated"/>
    <property type="evidence" value="ECO:0007669"/>
    <property type="project" value="TreeGrafter"/>
</dbReference>
<dbReference type="CDD" id="cd01716">
    <property type="entry name" value="Hfq"/>
    <property type="match status" value="1"/>
</dbReference>
<dbReference type="Gene3D" id="2.30.30.100">
    <property type="match status" value="1"/>
</dbReference>
<dbReference type="HAMAP" id="MF_00436">
    <property type="entry name" value="Hfq"/>
    <property type="match status" value="1"/>
</dbReference>
<dbReference type="InterPro" id="IPR005001">
    <property type="entry name" value="Hfq"/>
</dbReference>
<dbReference type="InterPro" id="IPR010920">
    <property type="entry name" value="LSM_dom_sf"/>
</dbReference>
<dbReference type="InterPro" id="IPR047575">
    <property type="entry name" value="Sm"/>
</dbReference>
<dbReference type="NCBIfam" id="TIGR02383">
    <property type="entry name" value="Hfq"/>
    <property type="match status" value="1"/>
</dbReference>
<dbReference type="NCBIfam" id="NF001602">
    <property type="entry name" value="PRK00395.1"/>
    <property type="match status" value="1"/>
</dbReference>
<dbReference type="PANTHER" id="PTHR34772">
    <property type="entry name" value="RNA-BINDING PROTEIN HFQ"/>
    <property type="match status" value="1"/>
</dbReference>
<dbReference type="PANTHER" id="PTHR34772:SF1">
    <property type="entry name" value="RNA-BINDING PROTEIN HFQ"/>
    <property type="match status" value="1"/>
</dbReference>
<dbReference type="Pfam" id="PF17209">
    <property type="entry name" value="Hfq"/>
    <property type="match status" value="1"/>
</dbReference>
<dbReference type="SUPFAM" id="SSF50182">
    <property type="entry name" value="Sm-like ribonucleoproteins"/>
    <property type="match status" value="1"/>
</dbReference>
<dbReference type="PROSITE" id="PS52002">
    <property type="entry name" value="SM"/>
    <property type="match status" value="1"/>
</dbReference>
<proteinExistence type="inferred from homology"/>
<protein>
    <recommendedName>
        <fullName evidence="1">RNA-binding protein Hfq</fullName>
    </recommendedName>
</protein>
<gene>
    <name evidence="1" type="primary">hfq</name>
    <name type="ordered locus">Meso_1613</name>
</gene>
<evidence type="ECO:0000255" key="1">
    <source>
        <dbReference type="HAMAP-Rule" id="MF_00436"/>
    </source>
</evidence>
<evidence type="ECO:0000255" key="2">
    <source>
        <dbReference type="PROSITE-ProRule" id="PRU01346"/>
    </source>
</evidence>
<accession>Q11HW7</accession>
<keyword id="KW-0694">RNA-binding</keyword>
<keyword id="KW-0346">Stress response</keyword>
<organism>
    <name type="scientific">Chelativorans sp. (strain BNC1)</name>
    <dbReference type="NCBI Taxonomy" id="266779"/>
    <lineage>
        <taxon>Bacteria</taxon>
        <taxon>Pseudomonadati</taxon>
        <taxon>Pseudomonadota</taxon>
        <taxon>Alphaproteobacteria</taxon>
        <taxon>Hyphomicrobiales</taxon>
        <taxon>Phyllobacteriaceae</taxon>
        <taxon>Chelativorans</taxon>
    </lineage>
</organism>
<name>HFQ_CHESB</name>
<feature type="chain" id="PRO_0000265164" description="RNA-binding protein Hfq">
    <location>
        <begin position="1"/>
        <end position="82"/>
    </location>
</feature>
<feature type="domain" description="Sm" evidence="2">
    <location>
        <begin position="10"/>
        <end position="70"/>
    </location>
</feature>
<sequence length="82" mass="9236">MAERSQNLQDLFLNTVRKSKNPLTIFLINGVKLTGVVTSFDNFCVLLRRDGHSQLVYKHAISTIMPSQPVQLFEAEEGSREG</sequence>
<reference key="1">
    <citation type="submission" date="2006-06" db="EMBL/GenBank/DDBJ databases">
        <title>Complete sequence of chromosome of Mesorhizobium sp. BNC1.</title>
        <authorList>
            <consortium name="US DOE Joint Genome Institute"/>
            <person name="Copeland A."/>
            <person name="Lucas S."/>
            <person name="Lapidus A."/>
            <person name="Barry K."/>
            <person name="Detter J.C."/>
            <person name="Glavina del Rio T."/>
            <person name="Hammon N."/>
            <person name="Israni S."/>
            <person name="Dalin E."/>
            <person name="Tice H."/>
            <person name="Pitluck S."/>
            <person name="Chertkov O."/>
            <person name="Brettin T."/>
            <person name="Bruce D."/>
            <person name="Han C."/>
            <person name="Tapia R."/>
            <person name="Gilna P."/>
            <person name="Schmutz J."/>
            <person name="Larimer F."/>
            <person name="Land M."/>
            <person name="Hauser L."/>
            <person name="Kyrpides N."/>
            <person name="Mikhailova N."/>
            <person name="Richardson P."/>
        </authorList>
    </citation>
    <scope>NUCLEOTIDE SEQUENCE [LARGE SCALE GENOMIC DNA]</scope>
    <source>
        <strain>BNC1</strain>
    </source>
</reference>